<evidence type="ECO:0000255" key="1">
    <source>
        <dbReference type="HAMAP-Rule" id="MF_00046"/>
    </source>
</evidence>
<proteinExistence type="inferred from homology"/>
<organism>
    <name type="scientific">Shigella sonnei (strain Ss046)</name>
    <dbReference type="NCBI Taxonomy" id="300269"/>
    <lineage>
        <taxon>Bacteria</taxon>
        <taxon>Pseudomonadati</taxon>
        <taxon>Pseudomonadota</taxon>
        <taxon>Gammaproteobacteria</taxon>
        <taxon>Enterobacterales</taxon>
        <taxon>Enterobacteriaceae</taxon>
        <taxon>Shigella</taxon>
    </lineage>
</organism>
<sequence>MNTQQLAKLRSIVPEMRRVRHIHFVGIGGAGMGGIAEVLANEGYQISGSDLAPNPVTQQLMNLGATIYFNHRPENVRDASVVVVSSAISADNPEIVAAHEARIPVIRRAEMLAELMRFRHGIAIAGTHGKTTTTAMVSSIYAEAGLDPTFVNGGLVKAAGVHARLGHGRYLIAEADESDASFLHLQPMVAIVTNIEADHMDTYQGDFENLKQTFINFLHNLPFYGRAVMCVDDPVIRELLPRVGRQTTTYGFSEDADVRVEDYQQIGPQGHFTLLRQDKEPMRVTLNAPGRHNALNAAAAVAVATEEGIDDEAILRALESFQGTGRRFDFLGEFPLEPVNGKSGTAMLVDDYGHHPTEVDATIKAARAGWPDKNLVMLFQPHRFTRTRDLYDDFANVLTQVDTLLMLEVYPAGEAPIPGADSRSLCRTIRGRGKIDPILVPDPAQVAEMLAPVLIGNDLILVQGAGNIGKIARSLAEIKLKPQTPEEEQHD</sequence>
<keyword id="KW-0067">ATP-binding</keyword>
<keyword id="KW-0131">Cell cycle</keyword>
<keyword id="KW-0132">Cell division</keyword>
<keyword id="KW-0133">Cell shape</keyword>
<keyword id="KW-0961">Cell wall biogenesis/degradation</keyword>
<keyword id="KW-0963">Cytoplasm</keyword>
<keyword id="KW-0436">Ligase</keyword>
<keyword id="KW-0547">Nucleotide-binding</keyword>
<keyword id="KW-0573">Peptidoglycan synthesis</keyword>
<keyword id="KW-1185">Reference proteome</keyword>
<accession>Q3Z5R8</accession>
<reference key="1">
    <citation type="journal article" date="2005" name="Nucleic Acids Res.">
        <title>Genome dynamics and diversity of Shigella species, the etiologic agents of bacillary dysentery.</title>
        <authorList>
            <person name="Yang F."/>
            <person name="Yang J."/>
            <person name="Zhang X."/>
            <person name="Chen L."/>
            <person name="Jiang Y."/>
            <person name="Yan Y."/>
            <person name="Tang X."/>
            <person name="Wang J."/>
            <person name="Xiong Z."/>
            <person name="Dong J."/>
            <person name="Xue Y."/>
            <person name="Zhu Y."/>
            <person name="Xu X."/>
            <person name="Sun L."/>
            <person name="Chen S."/>
            <person name="Nie H."/>
            <person name="Peng J."/>
            <person name="Xu J."/>
            <person name="Wang Y."/>
            <person name="Yuan Z."/>
            <person name="Wen Y."/>
            <person name="Yao Z."/>
            <person name="Shen Y."/>
            <person name="Qiang B."/>
            <person name="Hou Y."/>
            <person name="Yu J."/>
            <person name="Jin Q."/>
        </authorList>
    </citation>
    <scope>NUCLEOTIDE SEQUENCE [LARGE SCALE GENOMIC DNA]</scope>
    <source>
        <strain>Ss046</strain>
    </source>
</reference>
<dbReference type="EC" id="6.3.2.8" evidence="1"/>
<dbReference type="EMBL" id="CP000038">
    <property type="protein sequence ID" value="AAZ86894.1"/>
    <property type="molecule type" value="Genomic_DNA"/>
</dbReference>
<dbReference type="RefSeq" id="WP_001096046.1">
    <property type="nucleotide sequence ID" value="NC_007384.1"/>
</dbReference>
<dbReference type="SMR" id="Q3Z5R8"/>
<dbReference type="GeneID" id="93777343"/>
<dbReference type="KEGG" id="ssn:SSON_0099"/>
<dbReference type="HOGENOM" id="CLU_028104_2_2_6"/>
<dbReference type="UniPathway" id="UPA00219"/>
<dbReference type="Proteomes" id="UP000002529">
    <property type="component" value="Chromosome"/>
</dbReference>
<dbReference type="GO" id="GO:0005737">
    <property type="term" value="C:cytoplasm"/>
    <property type="evidence" value="ECO:0007669"/>
    <property type="project" value="UniProtKB-SubCell"/>
</dbReference>
<dbReference type="GO" id="GO:0005524">
    <property type="term" value="F:ATP binding"/>
    <property type="evidence" value="ECO:0007669"/>
    <property type="project" value="UniProtKB-UniRule"/>
</dbReference>
<dbReference type="GO" id="GO:0008763">
    <property type="term" value="F:UDP-N-acetylmuramate-L-alanine ligase activity"/>
    <property type="evidence" value="ECO:0007669"/>
    <property type="project" value="UniProtKB-UniRule"/>
</dbReference>
<dbReference type="GO" id="GO:0051301">
    <property type="term" value="P:cell division"/>
    <property type="evidence" value="ECO:0007669"/>
    <property type="project" value="UniProtKB-KW"/>
</dbReference>
<dbReference type="GO" id="GO:0071555">
    <property type="term" value="P:cell wall organization"/>
    <property type="evidence" value="ECO:0007669"/>
    <property type="project" value="UniProtKB-KW"/>
</dbReference>
<dbReference type="GO" id="GO:0009252">
    <property type="term" value="P:peptidoglycan biosynthetic process"/>
    <property type="evidence" value="ECO:0007669"/>
    <property type="project" value="UniProtKB-UniRule"/>
</dbReference>
<dbReference type="GO" id="GO:0008360">
    <property type="term" value="P:regulation of cell shape"/>
    <property type="evidence" value="ECO:0007669"/>
    <property type="project" value="UniProtKB-KW"/>
</dbReference>
<dbReference type="FunFam" id="3.40.1190.10:FF:000001">
    <property type="entry name" value="UDP-N-acetylmuramate--L-alanine ligase"/>
    <property type="match status" value="1"/>
</dbReference>
<dbReference type="FunFam" id="3.40.50.720:FF:000046">
    <property type="entry name" value="UDP-N-acetylmuramate--L-alanine ligase"/>
    <property type="match status" value="1"/>
</dbReference>
<dbReference type="FunFam" id="3.90.190.20:FF:000001">
    <property type="entry name" value="UDP-N-acetylmuramate--L-alanine ligase"/>
    <property type="match status" value="1"/>
</dbReference>
<dbReference type="Gene3D" id="3.90.190.20">
    <property type="entry name" value="Mur ligase, C-terminal domain"/>
    <property type="match status" value="1"/>
</dbReference>
<dbReference type="Gene3D" id="3.40.1190.10">
    <property type="entry name" value="Mur-like, catalytic domain"/>
    <property type="match status" value="1"/>
</dbReference>
<dbReference type="Gene3D" id="3.40.50.720">
    <property type="entry name" value="NAD(P)-binding Rossmann-like Domain"/>
    <property type="match status" value="1"/>
</dbReference>
<dbReference type="HAMAP" id="MF_00046">
    <property type="entry name" value="MurC"/>
    <property type="match status" value="1"/>
</dbReference>
<dbReference type="InterPro" id="IPR036565">
    <property type="entry name" value="Mur-like_cat_sf"/>
</dbReference>
<dbReference type="InterPro" id="IPR004101">
    <property type="entry name" value="Mur_ligase_C"/>
</dbReference>
<dbReference type="InterPro" id="IPR036615">
    <property type="entry name" value="Mur_ligase_C_dom_sf"/>
</dbReference>
<dbReference type="InterPro" id="IPR013221">
    <property type="entry name" value="Mur_ligase_cen"/>
</dbReference>
<dbReference type="InterPro" id="IPR000713">
    <property type="entry name" value="Mur_ligase_N"/>
</dbReference>
<dbReference type="InterPro" id="IPR050061">
    <property type="entry name" value="MurCDEF_pg_biosynth"/>
</dbReference>
<dbReference type="InterPro" id="IPR005758">
    <property type="entry name" value="UDP-N-AcMur_Ala_ligase_MurC"/>
</dbReference>
<dbReference type="NCBIfam" id="TIGR01082">
    <property type="entry name" value="murC"/>
    <property type="match status" value="1"/>
</dbReference>
<dbReference type="PANTHER" id="PTHR43445:SF3">
    <property type="entry name" value="UDP-N-ACETYLMURAMATE--L-ALANINE LIGASE"/>
    <property type="match status" value="1"/>
</dbReference>
<dbReference type="PANTHER" id="PTHR43445">
    <property type="entry name" value="UDP-N-ACETYLMURAMATE--L-ALANINE LIGASE-RELATED"/>
    <property type="match status" value="1"/>
</dbReference>
<dbReference type="Pfam" id="PF01225">
    <property type="entry name" value="Mur_ligase"/>
    <property type="match status" value="1"/>
</dbReference>
<dbReference type="Pfam" id="PF02875">
    <property type="entry name" value="Mur_ligase_C"/>
    <property type="match status" value="1"/>
</dbReference>
<dbReference type="Pfam" id="PF08245">
    <property type="entry name" value="Mur_ligase_M"/>
    <property type="match status" value="1"/>
</dbReference>
<dbReference type="SUPFAM" id="SSF51984">
    <property type="entry name" value="MurCD N-terminal domain"/>
    <property type="match status" value="1"/>
</dbReference>
<dbReference type="SUPFAM" id="SSF53623">
    <property type="entry name" value="MurD-like peptide ligases, catalytic domain"/>
    <property type="match status" value="1"/>
</dbReference>
<dbReference type="SUPFAM" id="SSF53244">
    <property type="entry name" value="MurD-like peptide ligases, peptide-binding domain"/>
    <property type="match status" value="1"/>
</dbReference>
<protein>
    <recommendedName>
        <fullName evidence="1">UDP-N-acetylmuramate--L-alanine ligase</fullName>
        <ecNumber evidence="1">6.3.2.8</ecNumber>
    </recommendedName>
    <alternativeName>
        <fullName evidence="1">UDP-N-acetylmuramoyl-L-alanine synthetase</fullName>
    </alternativeName>
</protein>
<gene>
    <name evidence="1" type="primary">murC</name>
    <name type="ordered locus">SSON_0099</name>
</gene>
<feature type="chain" id="PRO_0000242595" description="UDP-N-acetylmuramate--L-alanine ligase">
    <location>
        <begin position="1"/>
        <end position="491"/>
    </location>
</feature>
<feature type="binding site" evidence="1">
    <location>
        <begin position="126"/>
        <end position="132"/>
    </location>
    <ligand>
        <name>ATP</name>
        <dbReference type="ChEBI" id="CHEBI:30616"/>
    </ligand>
</feature>
<name>MURC_SHISS</name>
<comment type="function">
    <text evidence="1">Cell wall formation.</text>
</comment>
<comment type="catalytic activity">
    <reaction evidence="1">
        <text>UDP-N-acetyl-alpha-D-muramate + L-alanine + ATP = UDP-N-acetyl-alpha-D-muramoyl-L-alanine + ADP + phosphate + H(+)</text>
        <dbReference type="Rhea" id="RHEA:23372"/>
        <dbReference type="ChEBI" id="CHEBI:15378"/>
        <dbReference type="ChEBI" id="CHEBI:30616"/>
        <dbReference type="ChEBI" id="CHEBI:43474"/>
        <dbReference type="ChEBI" id="CHEBI:57972"/>
        <dbReference type="ChEBI" id="CHEBI:70757"/>
        <dbReference type="ChEBI" id="CHEBI:83898"/>
        <dbReference type="ChEBI" id="CHEBI:456216"/>
        <dbReference type="EC" id="6.3.2.8"/>
    </reaction>
</comment>
<comment type="pathway">
    <text evidence="1">Cell wall biogenesis; peptidoglycan biosynthesis.</text>
</comment>
<comment type="subcellular location">
    <subcellularLocation>
        <location evidence="1">Cytoplasm</location>
    </subcellularLocation>
</comment>
<comment type="similarity">
    <text evidence="1">Belongs to the MurCDEF family.</text>
</comment>